<protein>
    <recommendedName>
        <fullName evidence="1">Arginine repressor</fullName>
    </recommendedName>
</protein>
<gene>
    <name evidence="1" type="primary">argR</name>
    <name type="ordered locus">BWG_2938</name>
</gene>
<keyword id="KW-0028">Amino-acid biosynthesis</keyword>
<keyword id="KW-0055">Arginine biosynthesis</keyword>
<keyword id="KW-0963">Cytoplasm</keyword>
<keyword id="KW-0238">DNA-binding</keyword>
<keyword id="KW-0678">Repressor</keyword>
<keyword id="KW-0804">Transcription</keyword>
<keyword id="KW-0805">Transcription regulation</keyword>
<comment type="function">
    <text evidence="1">Regulates arginine biosynthesis genes.</text>
</comment>
<comment type="pathway">
    <text>Amino-acid biosynthesis; L-arginine biosynthesis [regulation].</text>
</comment>
<comment type="subcellular location">
    <subcellularLocation>
        <location evidence="1">Cytoplasm</location>
    </subcellularLocation>
</comment>
<comment type="similarity">
    <text evidence="1">Belongs to the ArgR family.</text>
</comment>
<name>ARGR_ECOBW</name>
<proteinExistence type="inferred from homology"/>
<reference key="1">
    <citation type="journal article" date="2009" name="J. Bacteriol.">
        <title>Genomic sequencing reveals regulatory mutations and recombinational events in the widely used MC4100 lineage of Escherichia coli K-12.</title>
        <authorList>
            <person name="Ferenci T."/>
            <person name="Zhou Z."/>
            <person name="Betteridge T."/>
            <person name="Ren Y."/>
            <person name="Liu Y."/>
            <person name="Feng L."/>
            <person name="Reeves P.R."/>
            <person name="Wang L."/>
        </authorList>
    </citation>
    <scope>NUCLEOTIDE SEQUENCE [LARGE SCALE GENOMIC DNA]</scope>
    <source>
        <strain>K12 / MC4100 / BW2952</strain>
    </source>
</reference>
<feature type="chain" id="PRO_1000203713" description="Arginine repressor">
    <location>
        <begin position="1"/>
        <end position="156"/>
    </location>
</feature>
<organism>
    <name type="scientific">Escherichia coli (strain K12 / MC4100 / BW2952)</name>
    <dbReference type="NCBI Taxonomy" id="595496"/>
    <lineage>
        <taxon>Bacteria</taxon>
        <taxon>Pseudomonadati</taxon>
        <taxon>Pseudomonadota</taxon>
        <taxon>Gammaproteobacteria</taxon>
        <taxon>Enterobacterales</taxon>
        <taxon>Enterobacteriaceae</taxon>
        <taxon>Escherichia</taxon>
    </lineage>
</organism>
<accession>C4ZSX5</accession>
<evidence type="ECO:0000255" key="1">
    <source>
        <dbReference type="HAMAP-Rule" id="MF_00173"/>
    </source>
</evidence>
<sequence>MRSSAKQEELVKAFKALLKEEKFSSQGEIVAALQEQGFDNINQSKVSRMLTKFGAVRTRNAKMEMVYCLPAELGVPTTSSPLKNLVLDIDYNDAVVVIHTSPGAAQLIARLLDSLGKAEGILGTIAGDDTIFTTPANGFTVKDLYEAILELFDQEL</sequence>
<dbReference type="EMBL" id="CP001396">
    <property type="protein sequence ID" value="ACR62942.1"/>
    <property type="molecule type" value="Genomic_DNA"/>
</dbReference>
<dbReference type="RefSeq" id="WP_001257846.1">
    <property type="nucleotide sequence ID" value="NC_012759.1"/>
</dbReference>
<dbReference type="SMR" id="C4ZSX5"/>
<dbReference type="GeneID" id="93778748"/>
<dbReference type="KEGG" id="ebw:BWG_2938"/>
<dbReference type="HOGENOM" id="CLU_097103_2_0_6"/>
<dbReference type="UniPathway" id="UPA00068"/>
<dbReference type="GO" id="GO:0005737">
    <property type="term" value="C:cytoplasm"/>
    <property type="evidence" value="ECO:0007669"/>
    <property type="project" value="UniProtKB-SubCell"/>
</dbReference>
<dbReference type="GO" id="GO:0034618">
    <property type="term" value="F:arginine binding"/>
    <property type="evidence" value="ECO:0007669"/>
    <property type="project" value="InterPro"/>
</dbReference>
<dbReference type="GO" id="GO:0003677">
    <property type="term" value="F:DNA binding"/>
    <property type="evidence" value="ECO:0007669"/>
    <property type="project" value="UniProtKB-KW"/>
</dbReference>
<dbReference type="GO" id="GO:0003700">
    <property type="term" value="F:DNA-binding transcription factor activity"/>
    <property type="evidence" value="ECO:0007669"/>
    <property type="project" value="UniProtKB-UniRule"/>
</dbReference>
<dbReference type="GO" id="GO:0006526">
    <property type="term" value="P:L-arginine biosynthetic process"/>
    <property type="evidence" value="ECO:0007669"/>
    <property type="project" value="UniProtKB-UniPathway"/>
</dbReference>
<dbReference type="GO" id="GO:0051259">
    <property type="term" value="P:protein complex oligomerization"/>
    <property type="evidence" value="ECO:0007669"/>
    <property type="project" value="InterPro"/>
</dbReference>
<dbReference type="GO" id="GO:1900079">
    <property type="term" value="P:regulation of arginine biosynthetic process"/>
    <property type="evidence" value="ECO:0007669"/>
    <property type="project" value="UniProtKB-UniRule"/>
</dbReference>
<dbReference type="FunFam" id="1.10.10.10:FF:000074">
    <property type="entry name" value="Arginine repressor"/>
    <property type="match status" value="1"/>
</dbReference>
<dbReference type="FunFam" id="3.30.1360.40:FF:000004">
    <property type="entry name" value="Arginine repressor"/>
    <property type="match status" value="1"/>
</dbReference>
<dbReference type="Gene3D" id="3.30.1360.40">
    <property type="match status" value="1"/>
</dbReference>
<dbReference type="Gene3D" id="1.10.10.10">
    <property type="entry name" value="Winged helix-like DNA-binding domain superfamily/Winged helix DNA-binding domain"/>
    <property type="match status" value="1"/>
</dbReference>
<dbReference type="HAMAP" id="MF_00173">
    <property type="entry name" value="Arg_repressor"/>
    <property type="match status" value="1"/>
</dbReference>
<dbReference type="InterPro" id="IPR001669">
    <property type="entry name" value="Arg_repress"/>
</dbReference>
<dbReference type="InterPro" id="IPR020899">
    <property type="entry name" value="Arg_repress_C"/>
</dbReference>
<dbReference type="InterPro" id="IPR036251">
    <property type="entry name" value="Arg_repress_C_sf"/>
</dbReference>
<dbReference type="InterPro" id="IPR020900">
    <property type="entry name" value="Arg_repress_DNA-bd"/>
</dbReference>
<dbReference type="InterPro" id="IPR036388">
    <property type="entry name" value="WH-like_DNA-bd_sf"/>
</dbReference>
<dbReference type="InterPro" id="IPR036390">
    <property type="entry name" value="WH_DNA-bd_sf"/>
</dbReference>
<dbReference type="NCBIfam" id="TIGR01529">
    <property type="entry name" value="argR_whole"/>
    <property type="match status" value="1"/>
</dbReference>
<dbReference type="NCBIfam" id="NF003457">
    <property type="entry name" value="PRK05066.1"/>
    <property type="match status" value="1"/>
</dbReference>
<dbReference type="PANTHER" id="PTHR34471">
    <property type="entry name" value="ARGININE REPRESSOR"/>
    <property type="match status" value="1"/>
</dbReference>
<dbReference type="PANTHER" id="PTHR34471:SF1">
    <property type="entry name" value="ARGININE REPRESSOR"/>
    <property type="match status" value="1"/>
</dbReference>
<dbReference type="Pfam" id="PF01316">
    <property type="entry name" value="Arg_repressor"/>
    <property type="match status" value="1"/>
</dbReference>
<dbReference type="Pfam" id="PF02863">
    <property type="entry name" value="Arg_repressor_C"/>
    <property type="match status" value="1"/>
</dbReference>
<dbReference type="PRINTS" id="PR01467">
    <property type="entry name" value="ARGREPRESSOR"/>
</dbReference>
<dbReference type="SUPFAM" id="SSF55252">
    <property type="entry name" value="C-terminal domain of arginine repressor"/>
    <property type="match status" value="1"/>
</dbReference>
<dbReference type="SUPFAM" id="SSF46785">
    <property type="entry name" value="Winged helix' DNA-binding domain"/>
    <property type="match status" value="1"/>
</dbReference>